<gene>
    <name type="ordered locus">CT_425</name>
</gene>
<evidence type="ECO:0000255" key="1"/>
<evidence type="ECO:0000305" key="2"/>
<sequence>MRRSVCYVTPSVARAGQISTWRFEYSSANFLPEGTLLKFDLGIDGRPIDWEIPSTDLSQPCNTIYLETPSEDIVAAKAVYAPGGYIPTFEFTLPCDVEAGDTFSIILGSSPNFPQEDSSGNGAQLFTQRRKPFSLYVDPSGKGSFEDPDIFTMDIRGNVLKNIRIFAPSYVIKNKRFDITVRFEDEFGNLTNFSPEETHIELSYEHLRENLNWQLFIPETGFVILPNLYFNEPGIYRIQLRNQATKEVFTSAPIKCFAETSSHLLWGLLHGESERVDSEGNIESCLRYFRDDCALNFFATSSFEIQDGLTPETIKTINQTVADFNEEDRFIALSGAQYLSEEPGEGIREVLLMKEPKSPGKHKECKLFPLSKLYKQSTSHELISIPSFTASKKFGYNFNNFHPEFERVVEIYNAWGCSERTEAEGNPFPIKGSIDSENPEGTVLSALKRNLRFGFVAGGLDDRNLYNHFFDSDQQQYSPGLTAVICNKYSRDSLLEALYQRQCYATTGQRIIVNFQITSAPMGSELSTAIKPGLVINRHISGYVAGTAKIASIEIIRNEDILHTFHPDGNNFEYEYDDLSPFAQVTLKDPQNGAPFAFYYLRVTQENGAMAWSSPIWIDLN</sequence>
<accession>O84432</accession>
<organism>
    <name type="scientific">Chlamydia trachomatis serovar D (strain ATCC VR-885 / DSM 19411 / UW-3/Cx)</name>
    <dbReference type="NCBI Taxonomy" id="272561"/>
    <lineage>
        <taxon>Bacteria</taxon>
        <taxon>Pseudomonadati</taxon>
        <taxon>Chlamydiota</taxon>
        <taxon>Chlamydiia</taxon>
        <taxon>Chlamydiales</taxon>
        <taxon>Chlamydiaceae</taxon>
        <taxon>Chlamydia/Chlamydophila group</taxon>
        <taxon>Chlamydia</taxon>
    </lineage>
</organism>
<comment type="similarity">
    <text evidence="2">Belongs to the chlamydial CPn_0512/CT_425/TC_0708 family.</text>
</comment>
<feature type="signal peptide" evidence="1">
    <location>
        <begin position="1"/>
        <end position="15"/>
    </location>
</feature>
<feature type="chain" id="PRO_0000013755" description="Uncharacterized protein CT_425">
    <location>
        <begin position="16"/>
        <end position="621"/>
    </location>
</feature>
<proteinExistence type="inferred from homology"/>
<dbReference type="EMBL" id="AE001273">
    <property type="protein sequence ID" value="AAC68022.1"/>
    <property type="molecule type" value="Genomic_DNA"/>
</dbReference>
<dbReference type="PIR" id="A71516">
    <property type="entry name" value="A71516"/>
</dbReference>
<dbReference type="RefSeq" id="NP_219937.1">
    <property type="nucleotide sequence ID" value="NC_000117.1"/>
</dbReference>
<dbReference type="RefSeq" id="WP_009871779.1">
    <property type="nucleotide sequence ID" value="NC_000117.1"/>
</dbReference>
<dbReference type="STRING" id="272561.CT_425"/>
<dbReference type="EnsemblBacteria" id="AAC68022">
    <property type="protein sequence ID" value="AAC68022"/>
    <property type="gene ID" value="CT_425"/>
</dbReference>
<dbReference type="GeneID" id="884685"/>
<dbReference type="KEGG" id="ctr:CT_425"/>
<dbReference type="PATRIC" id="fig|272561.5.peg.459"/>
<dbReference type="HOGENOM" id="CLU_030250_0_0_0"/>
<dbReference type="InParanoid" id="O84432"/>
<dbReference type="OrthoDB" id="543560at2"/>
<dbReference type="Proteomes" id="UP000000431">
    <property type="component" value="Chromosome"/>
</dbReference>
<dbReference type="InterPro" id="IPR022028">
    <property type="entry name" value="DUF3604"/>
</dbReference>
<dbReference type="Pfam" id="PF12228">
    <property type="entry name" value="DUF3604"/>
    <property type="match status" value="1"/>
</dbReference>
<reference key="1">
    <citation type="journal article" date="1998" name="Science">
        <title>Genome sequence of an obligate intracellular pathogen of humans: Chlamydia trachomatis.</title>
        <authorList>
            <person name="Stephens R.S."/>
            <person name="Kalman S."/>
            <person name="Lammel C.J."/>
            <person name="Fan J."/>
            <person name="Marathe R."/>
            <person name="Aravind L."/>
            <person name="Mitchell W.P."/>
            <person name="Olinger L."/>
            <person name="Tatusov R.L."/>
            <person name="Zhao Q."/>
            <person name="Koonin E.V."/>
            <person name="Davis R.W."/>
        </authorList>
    </citation>
    <scope>NUCLEOTIDE SEQUENCE [LARGE SCALE GENOMIC DNA]</scope>
    <source>
        <strain>ATCC VR-885 / DSM 19411 / UW-3/Cx</strain>
    </source>
</reference>
<name>Y425_CHLTR</name>
<keyword id="KW-1185">Reference proteome</keyword>
<keyword id="KW-0732">Signal</keyword>
<protein>
    <recommendedName>
        <fullName>Uncharacterized protein CT_425</fullName>
    </recommendedName>
</protein>